<protein>
    <recommendedName>
        <fullName>Guanine nucleotide-binding protein alpha-2 subunit</fullName>
        <shortName>GP-alpha-2</shortName>
    </recommendedName>
</protein>
<organism>
    <name type="scientific">Pisum sativum</name>
    <name type="common">Garden pea</name>
    <name type="synonym">Lathyrus oleraceus</name>
    <dbReference type="NCBI Taxonomy" id="3888"/>
    <lineage>
        <taxon>Eukaryota</taxon>
        <taxon>Viridiplantae</taxon>
        <taxon>Streptophyta</taxon>
        <taxon>Embryophyta</taxon>
        <taxon>Tracheophyta</taxon>
        <taxon>Spermatophyta</taxon>
        <taxon>Magnoliopsida</taxon>
        <taxon>eudicotyledons</taxon>
        <taxon>Gunneridae</taxon>
        <taxon>Pentapetalae</taxon>
        <taxon>rosids</taxon>
        <taxon>fabids</taxon>
        <taxon>Fabales</taxon>
        <taxon>Fabaceae</taxon>
        <taxon>Papilionoideae</taxon>
        <taxon>50 kb inversion clade</taxon>
        <taxon>NPAAA clade</taxon>
        <taxon>Hologalegina</taxon>
        <taxon>IRL clade</taxon>
        <taxon>Fabeae</taxon>
        <taxon>Pisum</taxon>
    </lineage>
</organism>
<comment type="function">
    <text>Guanine nucleotide-binding proteins (G proteins) are involved as modulators or transducers in various transmembrane signaling systems.</text>
</comment>
<comment type="cofactor">
    <cofactor evidence="3">
        <name>Mg(2+)</name>
        <dbReference type="ChEBI" id="CHEBI:18420"/>
    </cofactor>
</comment>
<comment type="subunit">
    <text>G proteins are composed of 3 units; alpha, beta and gamma. The alpha chain contains the guanine nucleotide binding site.</text>
</comment>
<comment type="domain">
    <text evidence="1">The helical domain (69-189) is required for self-activation.</text>
</comment>
<comment type="similarity">
    <text evidence="6">Belongs to the G-alpha family.</text>
</comment>
<reference key="1">
    <citation type="journal article" date="1999" name="Plant J.">
        <title>Cloning and characterisation of PGA1 and PGA2: two G protein alpha-subunits from pea that promote growth in the yeast Saccharomyces cerevisiae.</title>
        <authorList>
            <person name="Marsh J.F. III"/>
            <person name="Kaufman L.S."/>
        </authorList>
    </citation>
    <scope>NUCLEOTIDE SEQUENCE [MRNA]</scope>
    <source>
        <strain>cv. Alaska</strain>
        <tissue>Apical bud</tissue>
    </source>
</reference>
<dbReference type="EMBL" id="U97044">
    <property type="protein sequence ID" value="AAB57826.1"/>
    <property type="molecule type" value="mRNA"/>
</dbReference>
<dbReference type="PIR" id="T06814">
    <property type="entry name" value="T06814"/>
</dbReference>
<dbReference type="SMR" id="O04279"/>
<dbReference type="OrthoDB" id="5817230at2759"/>
<dbReference type="GO" id="GO:0005737">
    <property type="term" value="C:cytoplasm"/>
    <property type="evidence" value="ECO:0007669"/>
    <property type="project" value="TreeGrafter"/>
</dbReference>
<dbReference type="GO" id="GO:0005834">
    <property type="term" value="C:heterotrimeric G-protein complex"/>
    <property type="evidence" value="ECO:0007669"/>
    <property type="project" value="InterPro"/>
</dbReference>
<dbReference type="GO" id="GO:0001664">
    <property type="term" value="F:G protein-coupled receptor binding"/>
    <property type="evidence" value="ECO:0007669"/>
    <property type="project" value="InterPro"/>
</dbReference>
<dbReference type="GO" id="GO:0031683">
    <property type="term" value="F:G-protein beta/gamma-subunit complex binding"/>
    <property type="evidence" value="ECO:0007669"/>
    <property type="project" value="InterPro"/>
</dbReference>
<dbReference type="GO" id="GO:0005525">
    <property type="term" value="F:GTP binding"/>
    <property type="evidence" value="ECO:0007669"/>
    <property type="project" value="UniProtKB-KW"/>
</dbReference>
<dbReference type="GO" id="GO:0003924">
    <property type="term" value="F:GTPase activity"/>
    <property type="evidence" value="ECO:0007669"/>
    <property type="project" value="InterPro"/>
</dbReference>
<dbReference type="GO" id="GO:0046872">
    <property type="term" value="F:metal ion binding"/>
    <property type="evidence" value="ECO:0007669"/>
    <property type="project" value="UniProtKB-KW"/>
</dbReference>
<dbReference type="GO" id="GO:0007188">
    <property type="term" value="P:adenylate cyclase-modulating G protein-coupled receptor signaling pathway"/>
    <property type="evidence" value="ECO:0007669"/>
    <property type="project" value="InterPro"/>
</dbReference>
<dbReference type="CDD" id="cd00066">
    <property type="entry name" value="G-alpha"/>
    <property type="match status" value="1"/>
</dbReference>
<dbReference type="FunFam" id="1.10.400.10:FF:000008">
    <property type="entry name" value="Guanine nucleotide-binding protein alpha-1 subunit"/>
    <property type="match status" value="1"/>
</dbReference>
<dbReference type="FunFam" id="3.40.50.300:FF:000733">
    <property type="entry name" value="Guanine nucleotide-binding protein alpha-1 subunit"/>
    <property type="match status" value="1"/>
</dbReference>
<dbReference type="Gene3D" id="1.10.400.10">
    <property type="entry name" value="GI Alpha 1, domain 2-like"/>
    <property type="match status" value="1"/>
</dbReference>
<dbReference type="Gene3D" id="3.40.50.300">
    <property type="entry name" value="P-loop containing nucleotide triphosphate hydrolases"/>
    <property type="match status" value="1"/>
</dbReference>
<dbReference type="InterPro" id="IPR001019">
    <property type="entry name" value="Gprotein_alpha_su"/>
</dbReference>
<dbReference type="InterPro" id="IPR011025">
    <property type="entry name" value="GproteinA_insert"/>
</dbReference>
<dbReference type="InterPro" id="IPR027417">
    <property type="entry name" value="P-loop_NTPase"/>
</dbReference>
<dbReference type="InterPro" id="IPR002976">
    <property type="entry name" value="Plant_Gprotein_alpha"/>
</dbReference>
<dbReference type="PANTHER" id="PTHR10218">
    <property type="entry name" value="GTP-BINDING PROTEIN ALPHA SUBUNIT"/>
    <property type="match status" value="1"/>
</dbReference>
<dbReference type="PANTHER" id="PTHR10218:SF302">
    <property type="entry name" value="GUANINE NUCLEOTIDE-BINDING PROTEIN ALPHA-5 SUBUNIT"/>
    <property type="match status" value="1"/>
</dbReference>
<dbReference type="Pfam" id="PF00503">
    <property type="entry name" value="G-alpha"/>
    <property type="match status" value="1"/>
</dbReference>
<dbReference type="PRINTS" id="PR00318">
    <property type="entry name" value="GPROTEINA"/>
</dbReference>
<dbReference type="PRINTS" id="PR01242">
    <property type="entry name" value="GPROTEINAPLT"/>
</dbReference>
<dbReference type="SMART" id="SM00275">
    <property type="entry name" value="G_alpha"/>
    <property type="match status" value="1"/>
</dbReference>
<dbReference type="SUPFAM" id="SSF52540">
    <property type="entry name" value="P-loop containing nucleoside triphosphate hydrolases"/>
    <property type="match status" value="1"/>
</dbReference>
<dbReference type="SUPFAM" id="SSF47895">
    <property type="entry name" value="Transducin (alpha subunit), insertion domain"/>
    <property type="match status" value="1"/>
</dbReference>
<dbReference type="PROSITE" id="PS51882">
    <property type="entry name" value="G_ALPHA"/>
    <property type="match status" value="1"/>
</dbReference>
<gene>
    <name type="primary">GPA2</name>
    <name type="synonym">GA2</name>
</gene>
<feature type="initiator methionine" description="Removed" evidence="1">
    <location>
        <position position="1"/>
    </location>
</feature>
<feature type="chain" id="PRO_0000203624" description="Guanine nucleotide-binding protein alpha-2 subunit">
    <location>
        <begin position="2"/>
        <end position="384"/>
    </location>
</feature>
<feature type="domain" description="G-alpha" evidence="4">
    <location>
        <begin position="38"/>
        <end position="384"/>
    </location>
</feature>
<feature type="region of interest" description="Disordered" evidence="5">
    <location>
        <begin position="1"/>
        <end position="23"/>
    </location>
</feature>
<feature type="region of interest" description="G1 motif" evidence="4">
    <location>
        <begin position="41"/>
        <end position="54"/>
    </location>
</feature>
<feature type="region of interest" description="G2 motif" evidence="4">
    <location>
        <begin position="186"/>
        <end position="194"/>
    </location>
</feature>
<feature type="region of interest" description="G3 motif" evidence="4">
    <location>
        <begin position="215"/>
        <end position="224"/>
    </location>
</feature>
<feature type="region of interest" description="G4 motif" evidence="4">
    <location>
        <begin position="284"/>
        <end position="291"/>
    </location>
</feature>
<feature type="region of interest" description="G5 motif" evidence="4">
    <location>
        <begin position="354"/>
        <end position="359"/>
    </location>
</feature>
<feature type="binding site" evidence="3">
    <location>
        <position position="49"/>
    </location>
    <ligand>
        <name>GTP</name>
        <dbReference type="ChEBI" id="CHEBI:37565"/>
    </ligand>
</feature>
<feature type="binding site" evidence="3">
    <location>
        <position position="50"/>
    </location>
    <ligand>
        <name>GTP</name>
        <dbReference type="ChEBI" id="CHEBI:37565"/>
    </ligand>
</feature>
<feature type="binding site" evidence="3">
    <location>
        <position position="51"/>
    </location>
    <ligand>
        <name>GTP</name>
        <dbReference type="ChEBI" id="CHEBI:37565"/>
    </ligand>
</feature>
<feature type="binding site" evidence="3">
    <location>
        <position position="52"/>
    </location>
    <ligand>
        <name>GTP</name>
        <dbReference type="ChEBI" id="CHEBI:37565"/>
    </ligand>
</feature>
<feature type="binding site" evidence="3">
    <location>
        <position position="53"/>
    </location>
    <ligand>
        <name>GTP</name>
        <dbReference type="ChEBI" id="CHEBI:37565"/>
    </ligand>
</feature>
<feature type="binding site" evidence="3">
    <location>
        <position position="53"/>
    </location>
    <ligand>
        <name>Mg(2+)</name>
        <dbReference type="ChEBI" id="CHEBI:18420"/>
    </ligand>
</feature>
<feature type="binding site" evidence="3">
    <location>
        <position position="54"/>
    </location>
    <ligand>
        <name>GTP</name>
        <dbReference type="ChEBI" id="CHEBI:37565"/>
    </ligand>
</feature>
<feature type="binding site" evidence="3">
    <location>
        <position position="163"/>
    </location>
    <ligand>
        <name>GTP</name>
        <dbReference type="ChEBI" id="CHEBI:37565"/>
    </ligand>
</feature>
<feature type="binding site" evidence="3">
    <location>
        <position position="188"/>
    </location>
    <ligand>
        <name>GTP</name>
        <dbReference type="ChEBI" id="CHEBI:37565"/>
    </ligand>
</feature>
<feature type="binding site" evidence="3">
    <location>
        <position position="189"/>
    </location>
    <ligand>
        <name>GTP</name>
        <dbReference type="ChEBI" id="CHEBI:37565"/>
    </ligand>
</feature>
<feature type="binding site" evidence="3">
    <location>
        <position position="194"/>
    </location>
    <ligand>
        <name>GTP</name>
        <dbReference type="ChEBI" id="CHEBI:37565"/>
    </ligand>
</feature>
<feature type="binding site" evidence="3">
    <location>
        <position position="194"/>
    </location>
    <ligand>
        <name>Mg(2+)</name>
        <dbReference type="ChEBI" id="CHEBI:18420"/>
    </ligand>
</feature>
<feature type="binding site" evidence="3">
    <location>
        <position position="222"/>
    </location>
    <ligand>
        <name>GTP</name>
        <dbReference type="ChEBI" id="CHEBI:37565"/>
    </ligand>
</feature>
<feature type="binding site" evidence="3">
    <location>
        <position position="288"/>
    </location>
    <ligand>
        <name>GTP</name>
        <dbReference type="ChEBI" id="CHEBI:37565"/>
    </ligand>
</feature>
<feature type="binding site" evidence="3">
    <location>
        <position position="289"/>
    </location>
    <ligand>
        <name>GTP</name>
        <dbReference type="ChEBI" id="CHEBI:37565"/>
    </ligand>
</feature>
<feature type="binding site" evidence="3">
    <location>
        <position position="291"/>
    </location>
    <ligand>
        <name>GTP</name>
        <dbReference type="ChEBI" id="CHEBI:37565"/>
    </ligand>
</feature>
<feature type="binding site" evidence="3">
    <location>
        <position position="356"/>
    </location>
    <ligand>
        <name>GTP</name>
        <dbReference type="ChEBI" id="CHEBI:37565"/>
    </ligand>
</feature>
<feature type="lipid moiety-binding region" description="N-myristoyl glycine" evidence="2">
    <location>
        <position position="2"/>
    </location>
</feature>
<feature type="lipid moiety-binding region" description="S-palmitoyl cysteine" evidence="3">
    <location>
        <position position="5"/>
    </location>
</feature>
<proteinExistence type="evidence at transcript level"/>
<name>GPA2_PEA</name>
<evidence type="ECO:0000250" key="1"/>
<evidence type="ECO:0000250" key="2">
    <source>
        <dbReference type="UniProtKB" id="P10823"/>
    </source>
</evidence>
<evidence type="ECO:0000250" key="3">
    <source>
        <dbReference type="UniProtKB" id="P18064"/>
    </source>
</evidence>
<evidence type="ECO:0000255" key="4">
    <source>
        <dbReference type="PROSITE-ProRule" id="PRU01230"/>
    </source>
</evidence>
<evidence type="ECO:0000256" key="5">
    <source>
        <dbReference type="SAM" id="MobiDB-lite"/>
    </source>
</evidence>
<evidence type="ECO:0000305" key="6"/>
<accession>O04279</accession>
<keyword id="KW-0342">GTP-binding</keyword>
<keyword id="KW-0378">Hydrolase</keyword>
<keyword id="KW-0449">Lipoprotein</keyword>
<keyword id="KW-0460">Magnesium</keyword>
<keyword id="KW-0479">Metal-binding</keyword>
<keyword id="KW-0519">Myristate</keyword>
<keyword id="KW-0547">Nucleotide-binding</keyword>
<keyword id="KW-0564">Palmitate</keyword>
<keyword id="KW-0807">Transducer</keyword>
<sequence length="384" mass="44669">MGLVCSRNRRYRDSDPEENAQAAEIERRIESETKAEKHIQKLLLLGAGESGKSTIFKQIKLLFQTGFDEAELRSYTPVIFANVYQTIKVLHDGAKELAQNDLNSAKYVISDESKDIGEKLSEIGSRLDYPHLTKDLAKEIETLWEDAAIQETYARGNELQVPDCTKYFMENLQRLSDANYVPTKGDVLYARVRTTGVVEIQFSPVGENKRSGEVYRLFDVGGQRNERRKWIHLFEGVTAVIFCAAISEYDQTLFEDESKNRLMETKELFEWILKQPCFEKTSFMLFLNKFDIFEKKILNVPLNVCEWFKDYQPVSSGKQEIEHAYEFVKKKFEELYFQSSAPDRVDRVFKIYRTTALDQKVVKKTFKLVDETLRRRNLFEAGLL</sequence>